<accession>Q31CX3</accession>
<keyword id="KW-0963">Cytoplasm</keyword>
<keyword id="KW-0324">Glycolysis</keyword>
<keyword id="KW-0456">Lyase</keyword>
<keyword id="KW-0460">Magnesium</keyword>
<keyword id="KW-0479">Metal-binding</keyword>
<keyword id="KW-0964">Secreted</keyword>
<organism>
    <name type="scientific">Prochlorococcus marinus (strain MIT 9312)</name>
    <dbReference type="NCBI Taxonomy" id="74546"/>
    <lineage>
        <taxon>Bacteria</taxon>
        <taxon>Bacillati</taxon>
        <taxon>Cyanobacteriota</taxon>
        <taxon>Cyanophyceae</taxon>
        <taxon>Synechococcales</taxon>
        <taxon>Prochlorococcaceae</taxon>
        <taxon>Prochlorococcus</taxon>
    </lineage>
</organism>
<reference key="1">
    <citation type="journal article" date="2006" name="Science">
        <title>Genomic islands and the ecology and evolution of Prochlorococcus.</title>
        <authorList>
            <person name="Coleman M.L."/>
            <person name="Sullivan M.B."/>
            <person name="Martiny A.C."/>
            <person name="Steglich C."/>
            <person name="Barry K."/>
            <person name="Delong E.F."/>
            <person name="Chisholm S.W."/>
        </authorList>
    </citation>
    <scope>NUCLEOTIDE SEQUENCE [LARGE SCALE GENOMIC DNA]</scope>
    <source>
        <strain>MIT 9312</strain>
    </source>
</reference>
<comment type="function">
    <text evidence="1">Catalyzes the reversible conversion of 2-phosphoglycerate (2-PG) into phosphoenolpyruvate (PEP). It is essential for the degradation of carbohydrates via glycolysis.</text>
</comment>
<comment type="catalytic activity">
    <reaction evidence="1">
        <text>(2R)-2-phosphoglycerate = phosphoenolpyruvate + H2O</text>
        <dbReference type="Rhea" id="RHEA:10164"/>
        <dbReference type="ChEBI" id="CHEBI:15377"/>
        <dbReference type="ChEBI" id="CHEBI:58289"/>
        <dbReference type="ChEBI" id="CHEBI:58702"/>
        <dbReference type="EC" id="4.2.1.11"/>
    </reaction>
</comment>
<comment type="cofactor">
    <cofactor evidence="1">
        <name>Mg(2+)</name>
        <dbReference type="ChEBI" id="CHEBI:18420"/>
    </cofactor>
    <text evidence="1">Binds a second Mg(2+) ion via substrate during catalysis.</text>
</comment>
<comment type="pathway">
    <text evidence="1">Carbohydrate degradation; glycolysis; pyruvate from D-glyceraldehyde 3-phosphate: step 4/5.</text>
</comment>
<comment type="subcellular location">
    <subcellularLocation>
        <location evidence="1">Cytoplasm</location>
    </subcellularLocation>
    <subcellularLocation>
        <location evidence="1">Secreted</location>
    </subcellularLocation>
    <subcellularLocation>
        <location evidence="1">Cell surface</location>
    </subcellularLocation>
    <text evidence="1">Fractions of enolase are present in both the cytoplasm and on the cell surface.</text>
</comment>
<comment type="similarity">
    <text evidence="1">Belongs to the enolase family.</text>
</comment>
<gene>
    <name evidence="1" type="primary">eno</name>
    <name type="ordered locus">PMT9312_0210</name>
</gene>
<name>ENO_PROM9</name>
<feature type="chain" id="PRO_0000267072" description="Enolase">
    <location>
        <begin position="1"/>
        <end position="430"/>
    </location>
</feature>
<feature type="active site" description="Proton donor" evidence="1">
    <location>
        <position position="209"/>
    </location>
</feature>
<feature type="active site" description="Proton acceptor" evidence="1">
    <location>
        <position position="339"/>
    </location>
</feature>
<feature type="binding site" evidence="1">
    <location>
        <position position="167"/>
    </location>
    <ligand>
        <name>(2R)-2-phosphoglycerate</name>
        <dbReference type="ChEBI" id="CHEBI:58289"/>
    </ligand>
</feature>
<feature type="binding site" evidence="1">
    <location>
        <position position="246"/>
    </location>
    <ligand>
        <name>Mg(2+)</name>
        <dbReference type="ChEBI" id="CHEBI:18420"/>
    </ligand>
</feature>
<feature type="binding site" evidence="1">
    <location>
        <position position="287"/>
    </location>
    <ligand>
        <name>Mg(2+)</name>
        <dbReference type="ChEBI" id="CHEBI:18420"/>
    </ligand>
</feature>
<feature type="binding site" evidence="1">
    <location>
        <position position="314"/>
    </location>
    <ligand>
        <name>Mg(2+)</name>
        <dbReference type="ChEBI" id="CHEBI:18420"/>
    </ligand>
</feature>
<feature type="binding site" evidence="1">
    <location>
        <position position="339"/>
    </location>
    <ligand>
        <name>(2R)-2-phosphoglycerate</name>
        <dbReference type="ChEBI" id="CHEBI:58289"/>
    </ligand>
</feature>
<feature type="binding site" evidence="1">
    <location>
        <position position="368"/>
    </location>
    <ligand>
        <name>(2R)-2-phosphoglycerate</name>
        <dbReference type="ChEBI" id="CHEBI:58289"/>
    </ligand>
</feature>
<feature type="binding site" evidence="1">
    <location>
        <position position="369"/>
    </location>
    <ligand>
        <name>(2R)-2-phosphoglycerate</name>
        <dbReference type="ChEBI" id="CHEBI:58289"/>
    </ligand>
</feature>
<feature type="binding site" evidence="1">
    <location>
        <position position="390"/>
    </location>
    <ligand>
        <name>(2R)-2-phosphoglycerate</name>
        <dbReference type="ChEBI" id="CHEBI:58289"/>
    </ligand>
</feature>
<proteinExistence type="inferred from homology"/>
<evidence type="ECO:0000255" key="1">
    <source>
        <dbReference type="HAMAP-Rule" id="MF_00318"/>
    </source>
</evidence>
<protein>
    <recommendedName>
        <fullName evidence="1">Enolase</fullName>
        <ecNumber evidence="1">4.2.1.11</ecNumber>
    </recommendedName>
    <alternativeName>
        <fullName evidence="1">2-phospho-D-glycerate hydro-lyase</fullName>
    </alternativeName>
    <alternativeName>
        <fullName evidence="1">2-phosphoglycerate dehydratase</fullName>
    </alternativeName>
</protein>
<sequence length="430" mass="46071">MKETIDFLIDTIEARQVLDSRGNPTVEAEVFLECGASGRAIVPSGASTGAHEAHELRDGGSKYMGKGVLNAVNKIHETISPALCGLSALDQTTVDKLMIEIDGTFNKSNLGANSILAVSLATARASANALDVPLYRYLGDPLSNLLPVPLMNVINGGAHAPNSLDFQEFMLVPHGVQNFSESLRMGTEIFHSLKSLLDKKGLSTAVGDEGGFAPNLSSSEEAGDLLLEAIQKAGFIPGEQVSLALDAASTEFYSDGIYKYEGKSLNSSEMISYLSRLVSNYPIVSIEDGLAEDDWEGWSELNKELGNKVQLVGDDLFVTNTERLRKGIMEKSANSILIKVNQIGTLTETLEAIELAKTSGFTSVISHRSGETEDTTIADLSVATRSGQIKTGSLSRSERIAKYNRLLKIEEELGNQARFAGALGLGPKNI</sequence>
<dbReference type="EC" id="4.2.1.11" evidence="1"/>
<dbReference type="EMBL" id="CP000111">
    <property type="protein sequence ID" value="ABB49272.1"/>
    <property type="molecule type" value="Genomic_DNA"/>
</dbReference>
<dbReference type="RefSeq" id="WP_011375776.1">
    <property type="nucleotide sequence ID" value="NC_007577.1"/>
</dbReference>
<dbReference type="SMR" id="Q31CX3"/>
<dbReference type="STRING" id="74546.PMT9312_0210"/>
<dbReference type="KEGG" id="pmi:PMT9312_0210"/>
<dbReference type="eggNOG" id="COG0148">
    <property type="taxonomic scope" value="Bacteria"/>
</dbReference>
<dbReference type="HOGENOM" id="CLU_031223_2_1_3"/>
<dbReference type="OrthoDB" id="9804716at2"/>
<dbReference type="UniPathway" id="UPA00109">
    <property type="reaction ID" value="UER00187"/>
</dbReference>
<dbReference type="Proteomes" id="UP000002715">
    <property type="component" value="Chromosome"/>
</dbReference>
<dbReference type="GO" id="GO:0009986">
    <property type="term" value="C:cell surface"/>
    <property type="evidence" value="ECO:0007669"/>
    <property type="project" value="UniProtKB-SubCell"/>
</dbReference>
<dbReference type="GO" id="GO:0005576">
    <property type="term" value="C:extracellular region"/>
    <property type="evidence" value="ECO:0007669"/>
    <property type="project" value="UniProtKB-SubCell"/>
</dbReference>
<dbReference type="GO" id="GO:0000015">
    <property type="term" value="C:phosphopyruvate hydratase complex"/>
    <property type="evidence" value="ECO:0007669"/>
    <property type="project" value="InterPro"/>
</dbReference>
<dbReference type="GO" id="GO:0000287">
    <property type="term" value="F:magnesium ion binding"/>
    <property type="evidence" value="ECO:0007669"/>
    <property type="project" value="UniProtKB-UniRule"/>
</dbReference>
<dbReference type="GO" id="GO:0004634">
    <property type="term" value="F:phosphopyruvate hydratase activity"/>
    <property type="evidence" value="ECO:0007669"/>
    <property type="project" value="UniProtKB-UniRule"/>
</dbReference>
<dbReference type="GO" id="GO:0006096">
    <property type="term" value="P:glycolytic process"/>
    <property type="evidence" value="ECO:0007669"/>
    <property type="project" value="UniProtKB-UniRule"/>
</dbReference>
<dbReference type="CDD" id="cd03313">
    <property type="entry name" value="enolase"/>
    <property type="match status" value="1"/>
</dbReference>
<dbReference type="FunFam" id="3.20.20.120:FF:000001">
    <property type="entry name" value="Enolase"/>
    <property type="match status" value="1"/>
</dbReference>
<dbReference type="FunFam" id="3.30.390.10:FF:000001">
    <property type="entry name" value="Enolase"/>
    <property type="match status" value="1"/>
</dbReference>
<dbReference type="Gene3D" id="3.20.20.120">
    <property type="entry name" value="Enolase-like C-terminal domain"/>
    <property type="match status" value="1"/>
</dbReference>
<dbReference type="Gene3D" id="3.30.390.10">
    <property type="entry name" value="Enolase-like, N-terminal domain"/>
    <property type="match status" value="1"/>
</dbReference>
<dbReference type="HAMAP" id="MF_00318">
    <property type="entry name" value="Enolase"/>
    <property type="match status" value="1"/>
</dbReference>
<dbReference type="InterPro" id="IPR000941">
    <property type="entry name" value="Enolase"/>
</dbReference>
<dbReference type="InterPro" id="IPR036849">
    <property type="entry name" value="Enolase-like_C_sf"/>
</dbReference>
<dbReference type="InterPro" id="IPR029017">
    <property type="entry name" value="Enolase-like_N"/>
</dbReference>
<dbReference type="InterPro" id="IPR020810">
    <property type="entry name" value="Enolase_C"/>
</dbReference>
<dbReference type="InterPro" id="IPR020809">
    <property type="entry name" value="Enolase_CS"/>
</dbReference>
<dbReference type="InterPro" id="IPR020811">
    <property type="entry name" value="Enolase_N"/>
</dbReference>
<dbReference type="NCBIfam" id="TIGR01060">
    <property type="entry name" value="eno"/>
    <property type="match status" value="1"/>
</dbReference>
<dbReference type="PANTHER" id="PTHR11902">
    <property type="entry name" value="ENOLASE"/>
    <property type="match status" value="1"/>
</dbReference>
<dbReference type="PANTHER" id="PTHR11902:SF1">
    <property type="entry name" value="ENOLASE"/>
    <property type="match status" value="1"/>
</dbReference>
<dbReference type="Pfam" id="PF00113">
    <property type="entry name" value="Enolase_C"/>
    <property type="match status" value="1"/>
</dbReference>
<dbReference type="Pfam" id="PF03952">
    <property type="entry name" value="Enolase_N"/>
    <property type="match status" value="1"/>
</dbReference>
<dbReference type="PIRSF" id="PIRSF001400">
    <property type="entry name" value="Enolase"/>
    <property type="match status" value="1"/>
</dbReference>
<dbReference type="PRINTS" id="PR00148">
    <property type="entry name" value="ENOLASE"/>
</dbReference>
<dbReference type="SFLD" id="SFLDF00002">
    <property type="entry name" value="enolase"/>
    <property type="match status" value="1"/>
</dbReference>
<dbReference type="SFLD" id="SFLDG00178">
    <property type="entry name" value="enolase"/>
    <property type="match status" value="1"/>
</dbReference>
<dbReference type="SMART" id="SM01192">
    <property type="entry name" value="Enolase_C"/>
    <property type="match status" value="1"/>
</dbReference>
<dbReference type="SMART" id="SM01193">
    <property type="entry name" value="Enolase_N"/>
    <property type="match status" value="1"/>
</dbReference>
<dbReference type="SUPFAM" id="SSF51604">
    <property type="entry name" value="Enolase C-terminal domain-like"/>
    <property type="match status" value="1"/>
</dbReference>
<dbReference type="SUPFAM" id="SSF54826">
    <property type="entry name" value="Enolase N-terminal domain-like"/>
    <property type="match status" value="1"/>
</dbReference>
<dbReference type="PROSITE" id="PS00164">
    <property type="entry name" value="ENOLASE"/>
    <property type="match status" value="1"/>
</dbReference>